<name>PSBN_SOYBN</name>
<protein>
    <recommendedName>
        <fullName evidence="1">Protein PsbN</fullName>
    </recommendedName>
</protein>
<sequence length="43" mass="4688">METATLIAISISGLLVSFTGYALYIAFGQPSQQLRDPFEEHGD</sequence>
<accession>Q2PMQ7</accession>
<geneLocation type="chloroplast"/>
<proteinExistence type="inferred from homology"/>
<gene>
    <name evidence="1" type="primary">psbN</name>
</gene>
<evidence type="ECO:0000255" key="1">
    <source>
        <dbReference type="HAMAP-Rule" id="MF_00293"/>
    </source>
</evidence>
<keyword id="KW-0150">Chloroplast</keyword>
<keyword id="KW-0472">Membrane</keyword>
<keyword id="KW-0934">Plastid</keyword>
<keyword id="KW-1185">Reference proteome</keyword>
<keyword id="KW-0793">Thylakoid</keyword>
<keyword id="KW-0812">Transmembrane</keyword>
<keyword id="KW-1133">Transmembrane helix</keyword>
<reference key="1">
    <citation type="journal article" date="2005" name="Plant Mol. Biol.">
        <title>Complete chloroplast genome sequence of Glycine max and comparative analyses with other legume genomes.</title>
        <authorList>
            <person name="Saski C."/>
            <person name="Lee S.-B."/>
            <person name="Daniell H."/>
            <person name="Wood T.C."/>
            <person name="Tomkins J."/>
            <person name="Kim H.-G."/>
            <person name="Jansen R.K."/>
        </authorList>
    </citation>
    <scope>NUCLEOTIDE SEQUENCE [LARGE SCALE GENOMIC DNA]</scope>
    <source>
        <strain>cv. PI 437654</strain>
    </source>
</reference>
<feature type="chain" id="PRO_0000276269" description="Protein PsbN">
    <location>
        <begin position="1"/>
        <end position="43"/>
    </location>
</feature>
<feature type="transmembrane region" description="Helical" evidence="1">
    <location>
        <begin position="7"/>
        <end position="27"/>
    </location>
</feature>
<organism>
    <name type="scientific">Glycine max</name>
    <name type="common">Soybean</name>
    <name type="synonym">Glycine hispida</name>
    <dbReference type="NCBI Taxonomy" id="3847"/>
    <lineage>
        <taxon>Eukaryota</taxon>
        <taxon>Viridiplantae</taxon>
        <taxon>Streptophyta</taxon>
        <taxon>Embryophyta</taxon>
        <taxon>Tracheophyta</taxon>
        <taxon>Spermatophyta</taxon>
        <taxon>Magnoliopsida</taxon>
        <taxon>eudicotyledons</taxon>
        <taxon>Gunneridae</taxon>
        <taxon>Pentapetalae</taxon>
        <taxon>rosids</taxon>
        <taxon>fabids</taxon>
        <taxon>Fabales</taxon>
        <taxon>Fabaceae</taxon>
        <taxon>Papilionoideae</taxon>
        <taxon>50 kb inversion clade</taxon>
        <taxon>NPAAA clade</taxon>
        <taxon>indigoferoid/millettioid clade</taxon>
        <taxon>Phaseoleae</taxon>
        <taxon>Glycine</taxon>
        <taxon>Glycine subgen. Soja</taxon>
    </lineage>
</organism>
<comment type="function">
    <text evidence="1">May play a role in photosystem I and II biogenesis.</text>
</comment>
<comment type="subcellular location">
    <subcellularLocation>
        <location evidence="1">Plastid</location>
        <location evidence="1">Chloroplast thylakoid membrane</location>
        <topology evidence="1">Single-pass membrane protein</topology>
    </subcellularLocation>
</comment>
<comment type="similarity">
    <text evidence="1">Belongs to the PsbN family.</text>
</comment>
<comment type="caution">
    <text evidence="1">Originally thought to be a component of PSII; based on experiments in Synechocystis, N.tabacum and barley, and its absence from PSII in T.elongatus and T.vulcanus, this is probably not true.</text>
</comment>
<dbReference type="EMBL" id="DQ317523">
    <property type="protein sequence ID" value="ABC25151.1"/>
    <property type="molecule type" value="Genomic_DNA"/>
</dbReference>
<dbReference type="RefSeq" id="YP_538793.1">
    <property type="nucleotide sequence ID" value="NC_007942.1"/>
</dbReference>
<dbReference type="SMR" id="Q2PMQ7"/>
<dbReference type="FunCoup" id="Q2PMQ7">
    <property type="interactions" value="54"/>
</dbReference>
<dbReference type="STRING" id="3847.Q2PMQ7"/>
<dbReference type="PaxDb" id="3847-GLYMA15G20385.1"/>
<dbReference type="EnsemblPlants" id="KRH12703">
    <property type="protein sequence ID" value="KRH12703"/>
    <property type="gene ID" value="GLYMA_15G188400"/>
</dbReference>
<dbReference type="GeneID" id="3989325"/>
<dbReference type="Gramene" id="KRH12703">
    <property type="protein sequence ID" value="KRH12703"/>
    <property type="gene ID" value="GLYMA_15G188400"/>
</dbReference>
<dbReference type="KEGG" id="gmx:3989325"/>
<dbReference type="eggNOG" id="ENOG502S8EW">
    <property type="taxonomic scope" value="Eukaryota"/>
</dbReference>
<dbReference type="HOGENOM" id="CLU_205504_0_0_1"/>
<dbReference type="InParanoid" id="Q2PMQ7"/>
<dbReference type="OrthoDB" id="1336926at2759"/>
<dbReference type="Proteomes" id="UP000008827">
    <property type="component" value="Chloroplast"/>
</dbReference>
<dbReference type="GO" id="GO:0009535">
    <property type="term" value="C:chloroplast thylakoid membrane"/>
    <property type="evidence" value="ECO:0007669"/>
    <property type="project" value="UniProtKB-SubCell"/>
</dbReference>
<dbReference type="GO" id="GO:0015979">
    <property type="term" value="P:photosynthesis"/>
    <property type="evidence" value="ECO:0007669"/>
    <property type="project" value="InterPro"/>
</dbReference>
<dbReference type="HAMAP" id="MF_00293">
    <property type="entry name" value="PSII_PsbN"/>
    <property type="match status" value="1"/>
</dbReference>
<dbReference type="InterPro" id="IPR003398">
    <property type="entry name" value="PSII_PsbN"/>
</dbReference>
<dbReference type="PANTHER" id="PTHR35326">
    <property type="entry name" value="PROTEIN PSBN"/>
    <property type="match status" value="1"/>
</dbReference>
<dbReference type="PANTHER" id="PTHR35326:SF3">
    <property type="entry name" value="PROTEIN PSBN"/>
    <property type="match status" value="1"/>
</dbReference>
<dbReference type="Pfam" id="PF02468">
    <property type="entry name" value="PsbN"/>
    <property type="match status" value="1"/>
</dbReference>